<keyword id="KW-0156">Chromatin regulator</keyword>
<keyword id="KW-0479">Metal-binding</keyword>
<keyword id="KW-0539">Nucleus</keyword>
<keyword id="KW-1185">Reference proteome</keyword>
<keyword id="KW-0804">Transcription</keyword>
<keyword id="KW-0805">Transcription regulation</keyword>
<keyword id="KW-0862">Zinc</keyword>
<keyword id="KW-0863">Zinc-finger</keyword>
<dbReference type="EMBL" id="AP004144">
    <property type="protein sequence ID" value="BAD15587.1"/>
    <property type="molecule type" value="Genomic_DNA"/>
</dbReference>
<dbReference type="EMBL" id="AP004865">
    <property type="protein sequence ID" value="BAD15814.1"/>
    <property type="molecule type" value="Genomic_DNA"/>
</dbReference>
<dbReference type="EMBL" id="AP008208">
    <property type="status" value="NOT_ANNOTATED_CDS"/>
    <property type="molecule type" value="Genomic_DNA"/>
</dbReference>
<dbReference type="EMBL" id="AP014958">
    <property type="protein sequence ID" value="BAS79286.1"/>
    <property type="molecule type" value="Genomic_DNA"/>
</dbReference>
<dbReference type="EMBL" id="CM000139">
    <property type="protein sequence ID" value="EEE57208.1"/>
    <property type="molecule type" value="Genomic_DNA"/>
</dbReference>
<dbReference type="EMBL" id="AK073526">
    <property type="protein sequence ID" value="BAG93499.1"/>
    <property type="molecule type" value="mRNA"/>
</dbReference>
<dbReference type="EMBL" id="AK105951">
    <property type="protein sequence ID" value="BAG97461.1"/>
    <property type="molecule type" value="mRNA"/>
</dbReference>
<dbReference type="RefSeq" id="XP_015625160.1">
    <property type="nucleotide sequence ID" value="XM_015769674.1"/>
</dbReference>
<dbReference type="SMR" id="Q6Z7F4"/>
<dbReference type="STRING" id="39947.Q6Z7F4"/>
<dbReference type="PaxDb" id="39947-Q6Z7F4"/>
<dbReference type="EnsemblPlants" id="Os02t0564100-01">
    <property type="protein sequence ID" value="Os02t0564100-01"/>
    <property type="gene ID" value="Os02g0564100"/>
</dbReference>
<dbReference type="Gramene" id="Os02t0564100-01">
    <property type="protein sequence ID" value="Os02t0564100-01"/>
    <property type="gene ID" value="Os02g0564100"/>
</dbReference>
<dbReference type="eggNOG" id="KOG1632">
    <property type="taxonomic scope" value="Eukaryota"/>
</dbReference>
<dbReference type="HOGENOM" id="CLU_058315_1_0_1"/>
<dbReference type="InParanoid" id="Q6Z7F4"/>
<dbReference type="OMA" id="AVHHHTR"/>
<dbReference type="OrthoDB" id="436852at2759"/>
<dbReference type="Proteomes" id="UP000000763">
    <property type="component" value="Chromosome 2"/>
</dbReference>
<dbReference type="Proteomes" id="UP000007752">
    <property type="component" value="Chromosome 2"/>
</dbReference>
<dbReference type="Proteomes" id="UP000059680">
    <property type="component" value="Chromosome 2"/>
</dbReference>
<dbReference type="GO" id="GO:0005634">
    <property type="term" value="C:nucleus"/>
    <property type="evidence" value="ECO:0000318"/>
    <property type="project" value="GO_Central"/>
</dbReference>
<dbReference type="GO" id="GO:0042393">
    <property type="term" value="F:histone binding"/>
    <property type="evidence" value="ECO:0007669"/>
    <property type="project" value="InterPro"/>
</dbReference>
<dbReference type="GO" id="GO:0000976">
    <property type="term" value="F:transcription cis-regulatory region binding"/>
    <property type="evidence" value="ECO:0000318"/>
    <property type="project" value="GO_Central"/>
</dbReference>
<dbReference type="GO" id="GO:0003712">
    <property type="term" value="F:transcription coregulator activity"/>
    <property type="evidence" value="ECO:0000318"/>
    <property type="project" value="GO_Central"/>
</dbReference>
<dbReference type="GO" id="GO:0008270">
    <property type="term" value="F:zinc ion binding"/>
    <property type="evidence" value="ECO:0007669"/>
    <property type="project" value="UniProtKB-KW"/>
</dbReference>
<dbReference type="GO" id="GO:0006325">
    <property type="term" value="P:chromatin organization"/>
    <property type="evidence" value="ECO:0007669"/>
    <property type="project" value="UniProtKB-KW"/>
</dbReference>
<dbReference type="GO" id="GO:0006355">
    <property type="term" value="P:regulation of DNA-templated transcription"/>
    <property type="evidence" value="ECO:0007669"/>
    <property type="project" value="InterPro"/>
</dbReference>
<dbReference type="CDD" id="cd15613">
    <property type="entry name" value="PHD_AL_plant"/>
    <property type="match status" value="1"/>
</dbReference>
<dbReference type="FunFam" id="3.30.40.10:FF:000306">
    <property type="entry name" value="PHD finger alfin-like protein"/>
    <property type="match status" value="1"/>
</dbReference>
<dbReference type="Gene3D" id="3.30.40.10">
    <property type="entry name" value="Zinc/RING finger domain, C3HC4 (zinc finger)"/>
    <property type="match status" value="1"/>
</dbReference>
<dbReference type="InterPro" id="IPR045104">
    <property type="entry name" value="Alfin"/>
</dbReference>
<dbReference type="InterPro" id="IPR021998">
    <property type="entry name" value="Alfin_N"/>
</dbReference>
<dbReference type="InterPro" id="IPR044104">
    <property type="entry name" value="PHD_AL_plant"/>
</dbReference>
<dbReference type="InterPro" id="IPR019786">
    <property type="entry name" value="Zinc_finger_PHD-type_CS"/>
</dbReference>
<dbReference type="InterPro" id="IPR011011">
    <property type="entry name" value="Znf_FYVE_PHD"/>
</dbReference>
<dbReference type="InterPro" id="IPR001965">
    <property type="entry name" value="Znf_PHD"/>
</dbReference>
<dbReference type="InterPro" id="IPR019787">
    <property type="entry name" value="Znf_PHD-finger"/>
</dbReference>
<dbReference type="InterPro" id="IPR013083">
    <property type="entry name" value="Znf_RING/FYVE/PHD"/>
</dbReference>
<dbReference type="PANTHER" id="PTHR12321">
    <property type="entry name" value="CPG BINDING PROTEIN"/>
    <property type="match status" value="1"/>
</dbReference>
<dbReference type="PANTHER" id="PTHR12321:SF105">
    <property type="entry name" value="PHD FINGER PROTEIN ALFIN-LIKE 7"/>
    <property type="match status" value="1"/>
</dbReference>
<dbReference type="Pfam" id="PF12165">
    <property type="entry name" value="Alfin"/>
    <property type="match status" value="1"/>
</dbReference>
<dbReference type="Pfam" id="PF00628">
    <property type="entry name" value="PHD"/>
    <property type="match status" value="1"/>
</dbReference>
<dbReference type="SMART" id="SM00249">
    <property type="entry name" value="PHD"/>
    <property type="match status" value="1"/>
</dbReference>
<dbReference type="SUPFAM" id="SSF57903">
    <property type="entry name" value="FYVE/PHD zinc finger"/>
    <property type="match status" value="1"/>
</dbReference>
<dbReference type="PROSITE" id="PS01359">
    <property type="entry name" value="ZF_PHD_1"/>
    <property type="match status" value="1"/>
</dbReference>
<dbReference type="PROSITE" id="PS50016">
    <property type="entry name" value="ZF_PHD_2"/>
    <property type="match status" value="1"/>
</dbReference>
<proteinExistence type="evidence at transcript level"/>
<organism>
    <name type="scientific">Oryza sativa subsp. japonica</name>
    <name type="common">Rice</name>
    <dbReference type="NCBI Taxonomy" id="39947"/>
    <lineage>
        <taxon>Eukaryota</taxon>
        <taxon>Viridiplantae</taxon>
        <taxon>Streptophyta</taxon>
        <taxon>Embryophyta</taxon>
        <taxon>Tracheophyta</taxon>
        <taxon>Spermatophyta</taxon>
        <taxon>Magnoliopsida</taxon>
        <taxon>Liliopsida</taxon>
        <taxon>Poales</taxon>
        <taxon>Poaceae</taxon>
        <taxon>BOP clade</taxon>
        <taxon>Oryzoideae</taxon>
        <taxon>Oryzeae</taxon>
        <taxon>Oryzinae</taxon>
        <taxon>Oryza</taxon>
        <taxon>Oryza sativa</taxon>
    </lineage>
</organism>
<reference key="1">
    <citation type="journal article" date="2005" name="Nature">
        <title>The map-based sequence of the rice genome.</title>
        <authorList>
            <consortium name="International rice genome sequencing project (IRGSP)"/>
        </authorList>
    </citation>
    <scope>NUCLEOTIDE SEQUENCE [LARGE SCALE GENOMIC DNA]</scope>
    <source>
        <strain>cv. Nipponbare</strain>
    </source>
</reference>
<reference key="2">
    <citation type="journal article" date="2008" name="Nucleic Acids Res.">
        <title>The rice annotation project database (RAP-DB): 2008 update.</title>
        <authorList>
            <consortium name="The rice annotation project (RAP)"/>
        </authorList>
    </citation>
    <scope>GENOME REANNOTATION</scope>
    <source>
        <strain>cv. Nipponbare</strain>
    </source>
</reference>
<reference key="3">
    <citation type="journal article" date="2013" name="Rice">
        <title>Improvement of the Oryza sativa Nipponbare reference genome using next generation sequence and optical map data.</title>
        <authorList>
            <person name="Kawahara Y."/>
            <person name="de la Bastide M."/>
            <person name="Hamilton J.P."/>
            <person name="Kanamori H."/>
            <person name="McCombie W.R."/>
            <person name="Ouyang S."/>
            <person name="Schwartz D.C."/>
            <person name="Tanaka T."/>
            <person name="Wu J."/>
            <person name="Zhou S."/>
            <person name="Childs K.L."/>
            <person name="Davidson R.M."/>
            <person name="Lin H."/>
            <person name="Quesada-Ocampo L."/>
            <person name="Vaillancourt B."/>
            <person name="Sakai H."/>
            <person name="Lee S.S."/>
            <person name="Kim J."/>
            <person name="Numa H."/>
            <person name="Itoh T."/>
            <person name="Buell C.R."/>
            <person name="Matsumoto T."/>
        </authorList>
    </citation>
    <scope>GENOME REANNOTATION</scope>
    <source>
        <strain>cv. Nipponbare</strain>
    </source>
</reference>
<reference key="4">
    <citation type="journal article" date="2005" name="PLoS Biol.">
        <title>The genomes of Oryza sativa: a history of duplications.</title>
        <authorList>
            <person name="Yu J."/>
            <person name="Wang J."/>
            <person name="Lin W."/>
            <person name="Li S."/>
            <person name="Li H."/>
            <person name="Zhou J."/>
            <person name="Ni P."/>
            <person name="Dong W."/>
            <person name="Hu S."/>
            <person name="Zeng C."/>
            <person name="Zhang J."/>
            <person name="Zhang Y."/>
            <person name="Li R."/>
            <person name="Xu Z."/>
            <person name="Li S."/>
            <person name="Li X."/>
            <person name="Zheng H."/>
            <person name="Cong L."/>
            <person name="Lin L."/>
            <person name="Yin J."/>
            <person name="Geng J."/>
            <person name="Li G."/>
            <person name="Shi J."/>
            <person name="Liu J."/>
            <person name="Lv H."/>
            <person name="Li J."/>
            <person name="Wang J."/>
            <person name="Deng Y."/>
            <person name="Ran L."/>
            <person name="Shi X."/>
            <person name="Wang X."/>
            <person name="Wu Q."/>
            <person name="Li C."/>
            <person name="Ren X."/>
            <person name="Wang J."/>
            <person name="Wang X."/>
            <person name="Li D."/>
            <person name="Liu D."/>
            <person name="Zhang X."/>
            <person name="Ji Z."/>
            <person name="Zhao W."/>
            <person name="Sun Y."/>
            <person name="Zhang Z."/>
            <person name="Bao J."/>
            <person name="Han Y."/>
            <person name="Dong L."/>
            <person name="Ji J."/>
            <person name="Chen P."/>
            <person name="Wu S."/>
            <person name="Liu J."/>
            <person name="Xiao Y."/>
            <person name="Bu D."/>
            <person name="Tan J."/>
            <person name="Yang L."/>
            <person name="Ye C."/>
            <person name="Zhang J."/>
            <person name="Xu J."/>
            <person name="Zhou Y."/>
            <person name="Yu Y."/>
            <person name="Zhang B."/>
            <person name="Zhuang S."/>
            <person name="Wei H."/>
            <person name="Liu B."/>
            <person name="Lei M."/>
            <person name="Yu H."/>
            <person name="Li Y."/>
            <person name="Xu H."/>
            <person name="Wei S."/>
            <person name="He X."/>
            <person name="Fang L."/>
            <person name="Zhang Z."/>
            <person name="Zhang Y."/>
            <person name="Huang X."/>
            <person name="Su Z."/>
            <person name="Tong W."/>
            <person name="Li J."/>
            <person name="Tong Z."/>
            <person name="Li S."/>
            <person name="Ye J."/>
            <person name="Wang L."/>
            <person name="Fang L."/>
            <person name="Lei T."/>
            <person name="Chen C.-S."/>
            <person name="Chen H.-C."/>
            <person name="Xu Z."/>
            <person name="Li H."/>
            <person name="Huang H."/>
            <person name="Zhang F."/>
            <person name="Xu H."/>
            <person name="Li N."/>
            <person name="Zhao C."/>
            <person name="Li S."/>
            <person name="Dong L."/>
            <person name="Huang Y."/>
            <person name="Li L."/>
            <person name="Xi Y."/>
            <person name="Qi Q."/>
            <person name="Li W."/>
            <person name="Zhang B."/>
            <person name="Hu W."/>
            <person name="Zhang Y."/>
            <person name="Tian X."/>
            <person name="Jiao Y."/>
            <person name="Liang X."/>
            <person name="Jin J."/>
            <person name="Gao L."/>
            <person name="Zheng W."/>
            <person name="Hao B."/>
            <person name="Liu S.-M."/>
            <person name="Wang W."/>
            <person name="Yuan L."/>
            <person name="Cao M."/>
            <person name="McDermott J."/>
            <person name="Samudrala R."/>
            <person name="Wang J."/>
            <person name="Wong G.K.-S."/>
            <person name="Yang H."/>
        </authorList>
    </citation>
    <scope>NUCLEOTIDE SEQUENCE [LARGE SCALE GENOMIC DNA]</scope>
    <source>
        <strain>cv. Nipponbare</strain>
    </source>
</reference>
<reference key="5">
    <citation type="journal article" date="2003" name="Science">
        <title>Collection, mapping, and annotation of over 28,000 cDNA clones from japonica rice.</title>
        <authorList>
            <consortium name="The rice full-length cDNA consortium"/>
        </authorList>
    </citation>
    <scope>NUCLEOTIDE SEQUENCE [LARGE SCALE MRNA]</scope>
    <source>
        <strain>cv. Nipponbare</strain>
    </source>
</reference>
<reference key="6">
    <citation type="journal article" date="2009" name="Plant J.">
        <title>Arabidopsis ING and Alfin1-like protein families localize to the nucleus and bind to H3K4me3/2 via plant homeodomain fingers.</title>
        <authorList>
            <person name="Lee W.Y."/>
            <person name="Lee D."/>
            <person name="Chung W.I."/>
            <person name="Kwon C.S."/>
        </authorList>
    </citation>
    <scope>GENE FAMILY</scope>
</reference>
<gene>
    <name type="ordered locus">Os02g0564100</name>
    <name type="ordered locus">LOC_Os02g35600</name>
    <name type="ORF">OJ1712_E04.22</name>
    <name type="ORF">OsJ_07167</name>
    <name type="ORF">P0020C11.11</name>
</gene>
<accession>Q6Z7F4</accession>
<accession>A0A0P0VKJ4</accession>
<protein>
    <recommendedName>
        <fullName>PHD finger protein ALFIN-LIKE 7</fullName>
    </recommendedName>
</protein>
<comment type="function">
    <text evidence="1">Histone-binding component that specifically recognizes H3 tails trimethylated on 'Lys-4' (H3K4me3), which mark transcription start sites of virtually all active genes.</text>
</comment>
<comment type="subunit">
    <text evidence="1">Interacts with H3K4me3 and to a lesser extent with H3K4me2.</text>
</comment>
<comment type="subcellular location">
    <subcellularLocation>
        <location evidence="1">Nucleus</location>
    </subcellularLocation>
</comment>
<comment type="domain">
    <text evidence="1">The PHD-type zinc finger mediates the binding to H3K4me3.</text>
</comment>
<comment type="similarity">
    <text evidence="4">Belongs to the Alfin family.</text>
</comment>
<feature type="chain" id="PRO_0000412949" description="PHD finger protein ALFIN-LIKE 7">
    <location>
        <begin position="1"/>
        <end position="267"/>
    </location>
</feature>
<feature type="zinc finger region" description="PHD-type" evidence="2">
    <location>
        <begin position="211"/>
        <end position="263"/>
    </location>
</feature>
<feature type="region of interest" description="Disordered" evidence="3">
    <location>
        <begin position="162"/>
        <end position="207"/>
    </location>
</feature>
<feature type="compositionally biased region" description="Low complexity" evidence="3">
    <location>
        <begin position="165"/>
        <end position="188"/>
    </location>
</feature>
<feature type="compositionally biased region" description="Acidic residues" evidence="3">
    <location>
        <begin position="196"/>
        <end position="207"/>
    </location>
</feature>
<feature type="site" description="Histone H3K4me3 binding" evidence="1">
    <location>
        <position position="221"/>
    </location>
</feature>
<feature type="site" description="Histone H3K4me3 binding" evidence="1">
    <location>
        <position position="227"/>
    </location>
</feature>
<feature type="site" description="Histone H3K4me3 binding" evidence="1">
    <location>
        <position position="231"/>
    </location>
</feature>
<feature type="site" description="Histone H3K4me3 binding" evidence="1">
    <location>
        <position position="236"/>
    </location>
</feature>
<name>ALFL7_ORYSJ</name>
<evidence type="ECO:0000250" key="1"/>
<evidence type="ECO:0000255" key="2">
    <source>
        <dbReference type="PROSITE-ProRule" id="PRU00146"/>
    </source>
</evidence>
<evidence type="ECO:0000256" key="3">
    <source>
        <dbReference type="SAM" id="MobiDB-lite"/>
    </source>
</evidence>
<evidence type="ECO:0000305" key="4"/>
<sequence length="267" mass="29230">MDEGGGAGAAAAAAGNAAGAAVHHNARSAEDVFRDFRARRAGIVKALTTDVEKFYRQCDPEKENLCLYGLPNETWDVTLPAEEVPPELPEPALGINFARDGMIEKDWLSLVAVHSDAWLLSVAFYFGARFGFDKEARRRLFTMINGLPTVYEVVTGIAKKQTKVSNGSSKSNKSNPKPSKQSNSNSKPAKPPQPKDEEDSGPEGTEDEDQAYMCGACGETYANGEFWICCDVCEKWFHGKCVRITPAKAEHIKQYKCPGCSSKRSRE</sequence>